<proteinExistence type="inferred from homology"/>
<accession>Q5PFR0</accession>
<protein>
    <recommendedName>
        <fullName evidence="1">2-aminoethylphosphonate--pyruvate transaminase</fullName>
        <ecNumber evidence="1">2.6.1.37</ecNumber>
    </recommendedName>
    <alternativeName>
        <fullName evidence="1">2-aminoethylphosphonate aminotransferase</fullName>
    </alternativeName>
    <alternativeName>
        <fullName evidence="1">AEP transaminase</fullName>
        <shortName evidence="1">AEPT</shortName>
    </alternativeName>
</protein>
<feature type="chain" id="PRO_0000286785" description="2-aminoethylphosphonate--pyruvate transaminase">
    <location>
        <begin position="1"/>
        <end position="367"/>
    </location>
</feature>
<feature type="modified residue" description="N6-(pyridoxal phosphate)lysine" evidence="1">
    <location>
        <position position="194"/>
    </location>
</feature>
<dbReference type="EC" id="2.6.1.37" evidence="1"/>
<dbReference type="EMBL" id="CP000026">
    <property type="protein sequence ID" value="AAV78177.1"/>
    <property type="molecule type" value="Genomic_DNA"/>
</dbReference>
<dbReference type="RefSeq" id="WP_000203964.1">
    <property type="nucleotide sequence ID" value="NC_006511.1"/>
</dbReference>
<dbReference type="SMR" id="Q5PFR0"/>
<dbReference type="KEGG" id="spt:SPA2292"/>
<dbReference type="HOGENOM" id="CLU_027686_3_1_6"/>
<dbReference type="Proteomes" id="UP000008185">
    <property type="component" value="Chromosome"/>
</dbReference>
<dbReference type="GO" id="GO:0047304">
    <property type="term" value="F:2-aminoethylphosphonate-pyruvate transaminase activity"/>
    <property type="evidence" value="ECO:0007669"/>
    <property type="project" value="UniProtKB-UniRule"/>
</dbReference>
<dbReference type="GO" id="GO:0019700">
    <property type="term" value="P:organic phosphonate catabolic process"/>
    <property type="evidence" value="ECO:0007669"/>
    <property type="project" value="InterPro"/>
</dbReference>
<dbReference type="Gene3D" id="3.90.1150.10">
    <property type="entry name" value="Aspartate Aminotransferase, domain 1"/>
    <property type="match status" value="1"/>
</dbReference>
<dbReference type="Gene3D" id="3.40.640.10">
    <property type="entry name" value="Type I PLP-dependent aspartate aminotransferase-like (Major domain)"/>
    <property type="match status" value="1"/>
</dbReference>
<dbReference type="HAMAP" id="MF_01376">
    <property type="entry name" value="PhnW_aminotrans_5"/>
    <property type="match status" value="1"/>
</dbReference>
<dbReference type="InterPro" id="IPR000192">
    <property type="entry name" value="Aminotrans_V_dom"/>
</dbReference>
<dbReference type="InterPro" id="IPR012703">
    <property type="entry name" value="NH2EtPonate_pyrv_transaminase"/>
</dbReference>
<dbReference type="InterPro" id="IPR015424">
    <property type="entry name" value="PyrdxlP-dep_Trfase"/>
</dbReference>
<dbReference type="InterPro" id="IPR015421">
    <property type="entry name" value="PyrdxlP-dep_Trfase_major"/>
</dbReference>
<dbReference type="InterPro" id="IPR015422">
    <property type="entry name" value="PyrdxlP-dep_Trfase_small"/>
</dbReference>
<dbReference type="InterPro" id="IPR024169">
    <property type="entry name" value="SP_NH2Trfase/AEP_transaminase"/>
</dbReference>
<dbReference type="NCBIfam" id="TIGR03301">
    <property type="entry name" value="PhnW-AepZ"/>
    <property type="match status" value="1"/>
</dbReference>
<dbReference type="NCBIfam" id="NF010006">
    <property type="entry name" value="PRK13479.1"/>
    <property type="match status" value="1"/>
</dbReference>
<dbReference type="NCBIfam" id="TIGR02326">
    <property type="entry name" value="transamin_PhnW"/>
    <property type="match status" value="1"/>
</dbReference>
<dbReference type="PANTHER" id="PTHR42778">
    <property type="entry name" value="2-AMINOETHYLPHOSPHONATE--PYRUVATE TRANSAMINASE"/>
    <property type="match status" value="1"/>
</dbReference>
<dbReference type="PANTHER" id="PTHR42778:SF1">
    <property type="entry name" value="2-AMINOETHYLPHOSPHONATE--PYRUVATE TRANSAMINASE"/>
    <property type="match status" value="1"/>
</dbReference>
<dbReference type="Pfam" id="PF00266">
    <property type="entry name" value="Aminotran_5"/>
    <property type="match status" value="1"/>
</dbReference>
<dbReference type="PIRSF" id="PIRSF000524">
    <property type="entry name" value="SPT"/>
    <property type="match status" value="1"/>
</dbReference>
<dbReference type="SUPFAM" id="SSF53383">
    <property type="entry name" value="PLP-dependent transferases"/>
    <property type="match status" value="1"/>
</dbReference>
<name>PHNW_SALPA</name>
<organism>
    <name type="scientific">Salmonella paratyphi A (strain ATCC 9150 / SARB42)</name>
    <dbReference type="NCBI Taxonomy" id="295319"/>
    <lineage>
        <taxon>Bacteria</taxon>
        <taxon>Pseudomonadati</taxon>
        <taxon>Pseudomonadota</taxon>
        <taxon>Gammaproteobacteria</taxon>
        <taxon>Enterobacterales</taxon>
        <taxon>Enterobacteriaceae</taxon>
        <taxon>Salmonella</taxon>
    </lineage>
</organism>
<evidence type="ECO:0000255" key="1">
    <source>
        <dbReference type="HAMAP-Rule" id="MF_01376"/>
    </source>
</evidence>
<gene>
    <name evidence="1" type="primary">phnW</name>
    <name type="ordered locus">SPA2292</name>
</gene>
<comment type="function">
    <text evidence="1">Involved in phosphonate degradation.</text>
</comment>
<comment type="catalytic activity">
    <reaction evidence="1">
        <text>(2-aminoethyl)phosphonate + pyruvate = phosphonoacetaldehyde + L-alanine</text>
        <dbReference type="Rhea" id="RHEA:17021"/>
        <dbReference type="ChEBI" id="CHEBI:15361"/>
        <dbReference type="ChEBI" id="CHEBI:57418"/>
        <dbReference type="ChEBI" id="CHEBI:57972"/>
        <dbReference type="ChEBI" id="CHEBI:58383"/>
        <dbReference type="EC" id="2.6.1.37"/>
    </reaction>
</comment>
<comment type="cofactor">
    <cofactor evidence="1">
        <name>pyridoxal 5'-phosphate</name>
        <dbReference type="ChEBI" id="CHEBI:597326"/>
    </cofactor>
</comment>
<comment type="subunit">
    <text evidence="1">Homodimer.</text>
</comment>
<comment type="similarity">
    <text evidence="1">Belongs to the class-V pyridoxal-phosphate-dependent aminotransferase family. PhnW subfamily.</text>
</comment>
<keyword id="KW-0032">Aminotransferase</keyword>
<keyword id="KW-0663">Pyridoxal phosphate</keyword>
<keyword id="KW-0670">Pyruvate</keyword>
<keyword id="KW-0808">Transferase</keyword>
<reference key="1">
    <citation type="journal article" date="2004" name="Nat. Genet.">
        <title>Comparison of genome degradation in Paratyphi A and Typhi, human-restricted serovars of Salmonella enterica that cause typhoid.</title>
        <authorList>
            <person name="McClelland M."/>
            <person name="Sanderson K.E."/>
            <person name="Clifton S.W."/>
            <person name="Latreille P."/>
            <person name="Porwollik S."/>
            <person name="Sabo A."/>
            <person name="Meyer R."/>
            <person name="Bieri T."/>
            <person name="Ozersky P."/>
            <person name="McLellan M."/>
            <person name="Harkins C.R."/>
            <person name="Wang C."/>
            <person name="Nguyen C."/>
            <person name="Berghoff A."/>
            <person name="Elliott G."/>
            <person name="Kohlberg S."/>
            <person name="Strong C."/>
            <person name="Du F."/>
            <person name="Carter J."/>
            <person name="Kremizki C."/>
            <person name="Layman D."/>
            <person name="Leonard S."/>
            <person name="Sun H."/>
            <person name="Fulton L."/>
            <person name="Nash W."/>
            <person name="Miner T."/>
            <person name="Minx P."/>
            <person name="Delehaunty K."/>
            <person name="Fronick C."/>
            <person name="Magrini V."/>
            <person name="Nhan M."/>
            <person name="Warren W."/>
            <person name="Florea L."/>
            <person name="Spieth J."/>
            <person name="Wilson R.K."/>
        </authorList>
    </citation>
    <scope>NUCLEOTIDE SEQUENCE [LARGE SCALE GENOMIC DNA]</scope>
    <source>
        <strain>ATCC 9150 / SARB42</strain>
    </source>
</reference>
<sequence length="367" mass="40296">MTSRNYLLLTPGPLTTSRTVKEAMLFDSCTWDDDYNIGVVEQIRQQLTALATASEGYTSVLLQGSGSYAVEAVLGSALGPQDKVLIVSNGAYGARMVEMAGLMGIAHHAYDCGEVARPDVQAIDAILNVDPTISHIAMVHSETTTGMLNPIDEVGALAHRYGKTYIVDAMSSFGGIPMDIAALHIDYLISSANKCIQGVPGFAFVIAREQKLAACKGRSRSLSLDLYAQWRCMEDNHGKWRFTSPTHTVLAFAQALKELAKEGGVAARHQRYQQNQRSLVAGMRALGFNTLLDDELHSPIITAFYSPEDPQYRFSEFYRRLKEQGFVIYPGKVSQSDCFRIGNIGEVYAADITALLTAIRTAMYWTK</sequence>